<accession>Q0G9R1</accession>
<protein>
    <recommendedName>
        <fullName evidence="2">Photosystem I iron-sulfur center</fullName>
        <ecNumber evidence="2">1.97.1.12</ecNumber>
    </recommendedName>
    <alternativeName>
        <fullName evidence="2">9 kDa polypeptide</fullName>
    </alternativeName>
    <alternativeName>
        <fullName evidence="2">PSI-C</fullName>
    </alternativeName>
    <alternativeName>
        <fullName evidence="2">Photosystem I subunit VII</fullName>
    </alternativeName>
    <alternativeName>
        <fullName evidence="2">PsaC</fullName>
    </alternativeName>
</protein>
<evidence type="ECO:0000250" key="1"/>
<evidence type="ECO:0000255" key="2">
    <source>
        <dbReference type="HAMAP-Rule" id="MF_01303"/>
    </source>
</evidence>
<proteinExistence type="inferred from homology"/>
<comment type="function">
    <text evidence="2">Apoprotein for the two 4Fe-4S centers FA and FB of photosystem I (PSI); essential for photochemical activity. FB is the terminal electron acceptor of PSI, donating electrons to ferredoxin. The C-terminus interacts with PsaA/B/D and helps assemble the protein into the PSI complex. Required for binding of PsaD and PsaE to PSI. PSI is a plastocyanin-ferredoxin oxidoreductase, converting photonic excitation into a charge separation, which transfers an electron from the donor P700 chlorophyll pair to the spectroscopically characterized acceptors A0, A1, FX, FA and FB in turn.</text>
</comment>
<comment type="catalytic activity">
    <reaction evidence="2">
        <text>reduced [plastocyanin] + hnu + oxidized [2Fe-2S]-[ferredoxin] = oxidized [plastocyanin] + reduced [2Fe-2S]-[ferredoxin]</text>
        <dbReference type="Rhea" id="RHEA:30407"/>
        <dbReference type="Rhea" id="RHEA-COMP:10000"/>
        <dbReference type="Rhea" id="RHEA-COMP:10001"/>
        <dbReference type="Rhea" id="RHEA-COMP:10039"/>
        <dbReference type="Rhea" id="RHEA-COMP:10040"/>
        <dbReference type="ChEBI" id="CHEBI:29036"/>
        <dbReference type="ChEBI" id="CHEBI:30212"/>
        <dbReference type="ChEBI" id="CHEBI:33737"/>
        <dbReference type="ChEBI" id="CHEBI:33738"/>
        <dbReference type="ChEBI" id="CHEBI:49552"/>
        <dbReference type="EC" id="1.97.1.12"/>
    </reaction>
</comment>
<comment type="cofactor">
    <cofactor evidence="2">
        <name>[4Fe-4S] cluster</name>
        <dbReference type="ChEBI" id="CHEBI:49883"/>
    </cofactor>
    <text evidence="2">Binds 2 [4Fe-4S] clusters. Cluster 2 is most probably the spectroscopically characterized electron acceptor FA and cluster 1 is most probably FB.</text>
</comment>
<comment type="subunit">
    <text evidence="2">The eukaryotic PSI reaction center is composed of at least 11 subunits.</text>
</comment>
<comment type="subcellular location">
    <subcellularLocation>
        <location evidence="2">Plastid</location>
        <location evidence="2">Chloroplast thylakoid membrane</location>
        <topology evidence="2">Peripheral membrane protein</topology>
        <orientation evidence="2">Stromal side</orientation>
    </subcellularLocation>
</comment>
<geneLocation type="chloroplast"/>
<sequence>MSHSVKIYDTCIGCTQCVRACPTDVLEMIPWDGCKAKQIASAPRTEDCVGCKRCESACPTDFLSVRVSLWNETTRSMGLAY</sequence>
<keyword id="KW-0004">4Fe-4S</keyword>
<keyword id="KW-0150">Chloroplast</keyword>
<keyword id="KW-0249">Electron transport</keyword>
<keyword id="KW-0408">Iron</keyword>
<keyword id="KW-0411">Iron-sulfur</keyword>
<keyword id="KW-0472">Membrane</keyword>
<keyword id="KW-0479">Metal-binding</keyword>
<keyword id="KW-0560">Oxidoreductase</keyword>
<keyword id="KW-0602">Photosynthesis</keyword>
<keyword id="KW-0603">Photosystem I</keyword>
<keyword id="KW-0934">Plastid</keyword>
<keyword id="KW-0677">Repeat</keyword>
<keyword id="KW-0793">Thylakoid</keyword>
<keyword id="KW-0813">Transport</keyword>
<reference key="1">
    <citation type="journal article" date="2006" name="BMC Genomics">
        <title>Complete plastid genome sequence of Daucus carota: implications for biotechnology and phylogeny of angiosperms.</title>
        <authorList>
            <person name="Ruhlman T."/>
            <person name="Lee S.-B."/>
            <person name="Jansen R.K."/>
            <person name="Hostetler J.B."/>
            <person name="Tallon L.J."/>
            <person name="Town C.D."/>
            <person name="Daniell H."/>
        </authorList>
    </citation>
    <scope>NUCLEOTIDE SEQUENCE [LARGE SCALE GENOMIC DNA]</scope>
    <source>
        <strain>cv. Danvers Half-long</strain>
    </source>
</reference>
<gene>
    <name evidence="2" type="primary">psaC</name>
</gene>
<dbReference type="EC" id="1.97.1.12" evidence="2"/>
<dbReference type="EMBL" id="DQ898156">
    <property type="protein sequence ID" value="ABI32475.1"/>
    <property type="molecule type" value="Genomic_DNA"/>
</dbReference>
<dbReference type="RefSeq" id="YP_740168.1">
    <property type="nucleotide sequence ID" value="NC_008325.1"/>
</dbReference>
<dbReference type="SMR" id="Q0G9R1"/>
<dbReference type="GeneID" id="4266811"/>
<dbReference type="OMA" id="GHMSHAV"/>
<dbReference type="GO" id="GO:0009535">
    <property type="term" value="C:chloroplast thylakoid membrane"/>
    <property type="evidence" value="ECO:0007669"/>
    <property type="project" value="UniProtKB-SubCell"/>
</dbReference>
<dbReference type="GO" id="GO:0009522">
    <property type="term" value="C:photosystem I"/>
    <property type="evidence" value="ECO:0007669"/>
    <property type="project" value="UniProtKB-KW"/>
</dbReference>
<dbReference type="GO" id="GO:0051539">
    <property type="term" value="F:4 iron, 4 sulfur cluster binding"/>
    <property type="evidence" value="ECO:0007669"/>
    <property type="project" value="UniProtKB-KW"/>
</dbReference>
<dbReference type="GO" id="GO:0009055">
    <property type="term" value="F:electron transfer activity"/>
    <property type="evidence" value="ECO:0007669"/>
    <property type="project" value="UniProtKB-UniRule"/>
</dbReference>
<dbReference type="GO" id="GO:0046872">
    <property type="term" value="F:metal ion binding"/>
    <property type="evidence" value="ECO:0007669"/>
    <property type="project" value="UniProtKB-KW"/>
</dbReference>
<dbReference type="GO" id="GO:0016491">
    <property type="term" value="F:oxidoreductase activity"/>
    <property type="evidence" value="ECO:0007669"/>
    <property type="project" value="UniProtKB-KW"/>
</dbReference>
<dbReference type="GO" id="GO:0009773">
    <property type="term" value="P:photosynthetic electron transport in photosystem I"/>
    <property type="evidence" value="ECO:0007669"/>
    <property type="project" value="InterPro"/>
</dbReference>
<dbReference type="FunFam" id="3.30.70.20:FF:000001">
    <property type="entry name" value="Photosystem I iron-sulfur center"/>
    <property type="match status" value="1"/>
</dbReference>
<dbReference type="Gene3D" id="3.30.70.20">
    <property type="match status" value="1"/>
</dbReference>
<dbReference type="HAMAP" id="MF_01303">
    <property type="entry name" value="PSI_PsaC"/>
    <property type="match status" value="1"/>
</dbReference>
<dbReference type="InterPro" id="IPR017896">
    <property type="entry name" value="4Fe4S_Fe-S-bd"/>
</dbReference>
<dbReference type="InterPro" id="IPR017900">
    <property type="entry name" value="4Fe4S_Fe_S_CS"/>
</dbReference>
<dbReference type="InterPro" id="IPR050157">
    <property type="entry name" value="PSI_iron-sulfur_center"/>
</dbReference>
<dbReference type="InterPro" id="IPR017491">
    <property type="entry name" value="PSI_PsaC"/>
</dbReference>
<dbReference type="NCBIfam" id="TIGR03048">
    <property type="entry name" value="PS_I_psaC"/>
    <property type="match status" value="1"/>
</dbReference>
<dbReference type="PANTHER" id="PTHR24960:SF79">
    <property type="entry name" value="PHOTOSYSTEM I IRON-SULFUR CENTER"/>
    <property type="match status" value="1"/>
</dbReference>
<dbReference type="PANTHER" id="PTHR24960">
    <property type="entry name" value="PHOTOSYSTEM I IRON-SULFUR CENTER-RELATED"/>
    <property type="match status" value="1"/>
</dbReference>
<dbReference type="Pfam" id="PF14697">
    <property type="entry name" value="Fer4_21"/>
    <property type="match status" value="1"/>
</dbReference>
<dbReference type="SUPFAM" id="SSF54862">
    <property type="entry name" value="4Fe-4S ferredoxins"/>
    <property type="match status" value="1"/>
</dbReference>
<dbReference type="PROSITE" id="PS00198">
    <property type="entry name" value="4FE4S_FER_1"/>
    <property type="match status" value="2"/>
</dbReference>
<dbReference type="PROSITE" id="PS51379">
    <property type="entry name" value="4FE4S_FER_2"/>
    <property type="match status" value="2"/>
</dbReference>
<feature type="initiator methionine" description="Removed" evidence="1">
    <location>
        <position position="1"/>
    </location>
</feature>
<feature type="chain" id="PRO_0000275978" description="Photosystem I iron-sulfur center">
    <location>
        <begin position="2"/>
        <end position="81"/>
    </location>
</feature>
<feature type="domain" description="4Fe-4S ferredoxin-type 1" evidence="2">
    <location>
        <begin position="2"/>
        <end position="31"/>
    </location>
</feature>
<feature type="domain" description="4Fe-4S ferredoxin-type 2" evidence="2">
    <location>
        <begin position="39"/>
        <end position="68"/>
    </location>
</feature>
<feature type="binding site" evidence="2">
    <location>
        <position position="11"/>
    </location>
    <ligand>
        <name>[4Fe-4S] cluster</name>
        <dbReference type="ChEBI" id="CHEBI:49883"/>
        <label>1</label>
    </ligand>
</feature>
<feature type="binding site" evidence="2">
    <location>
        <position position="14"/>
    </location>
    <ligand>
        <name>[4Fe-4S] cluster</name>
        <dbReference type="ChEBI" id="CHEBI:49883"/>
        <label>1</label>
    </ligand>
</feature>
<feature type="binding site" evidence="2">
    <location>
        <position position="17"/>
    </location>
    <ligand>
        <name>[4Fe-4S] cluster</name>
        <dbReference type="ChEBI" id="CHEBI:49883"/>
        <label>1</label>
    </ligand>
</feature>
<feature type="binding site" evidence="2">
    <location>
        <position position="21"/>
    </location>
    <ligand>
        <name>[4Fe-4S] cluster</name>
        <dbReference type="ChEBI" id="CHEBI:49883"/>
        <label>2</label>
    </ligand>
</feature>
<feature type="binding site" evidence="2">
    <location>
        <position position="48"/>
    </location>
    <ligand>
        <name>[4Fe-4S] cluster</name>
        <dbReference type="ChEBI" id="CHEBI:49883"/>
        <label>2</label>
    </ligand>
</feature>
<feature type="binding site" evidence="2">
    <location>
        <position position="51"/>
    </location>
    <ligand>
        <name>[4Fe-4S] cluster</name>
        <dbReference type="ChEBI" id="CHEBI:49883"/>
        <label>2</label>
    </ligand>
</feature>
<feature type="binding site" evidence="2">
    <location>
        <position position="54"/>
    </location>
    <ligand>
        <name>[4Fe-4S] cluster</name>
        <dbReference type="ChEBI" id="CHEBI:49883"/>
        <label>2</label>
    </ligand>
</feature>
<feature type="binding site" evidence="2">
    <location>
        <position position="58"/>
    </location>
    <ligand>
        <name>[4Fe-4S] cluster</name>
        <dbReference type="ChEBI" id="CHEBI:49883"/>
        <label>1</label>
    </ligand>
</feature>
<name>PSAC_DAUCA</name>
<organism>
    <name type="scientific">Daucus carota</name>
    <name type="common">Wild carrot</name>
    <dbReference type="NCBI Taxonomy" id="4039"/>
    <lineage>
        <taxon>Eukaryota</taxon>
        <taxon>Viridiplantae</taxon>
        <taxon>Streptophyta</taxon>
        <taxon>Embryophyta</taxon>
        <taxon>Tracheophyta</taxon>
        <taxon>Spermatophyta</taxon>
        <taxon>Magnoliopsida</taxon>
        <taxon>eudicotyledons</taxon>
        <taxon>Gunneridae</taxon>
        <taxon>Pentapetalae</taxon>
        <taxon>asterids</taxon>
        <taxon>campanulids</taxon>
        <taxon>Apiales</taxon>
        <taxon>Apiaceae</taxon>
        <taxon>Apioideae</taxon>
        <taxon>Scandiceae</taxon>
        <taxon>Daucinae</taxon>
        <taxon>Daucus</taxon>
        <taxon>Daucus sect. Daucus</taxon>
    </lineage>
</organism>